<accession>Q0MQI2</accession>
<comment type="function">
    <text evidence="1">Core subunit of the mitochondrial membrane respiratory chain NADH dehydrogenase (Complex I) which catalyzes electron transfer from NADH through the respiratory chain, using ubiquinone as an electron acceptor (By similarity). Essential for the catalytic activity and assembly of complex I (By similarity).</text>
</comment>
<comment type="catalytic activity">
    <reaction evidence="1">
        <text>a ubiquinone + NADH + 5 H(+)(in) = a ubiquinol + NAD(+) + 4 H(+)(out)</text>
        <dbReference type="Rhea" id="RHEA:29091"/>
        <dbReference type="Rhea" id="RHEA-COMP:9565"/>
        <dbReference type="Rhea" id="RHEA-COMP:9566"/>
        <dbReference type="ChEBI" id="CHEBI:15378"/>
        <dbReference type="ChEBI" id="CHEBI:16389"/>
        <dbReference type="ChEBI" id="CHEBI:17976"/>
        <dbReference type="ChEBI" id="CHEBI:57540"/>
        <dbReference type="ChEBI" id="CHEBI:57945"/>
        <dbReference type="EC" id="7.1.1.2"/>
    </reaction>
</comment>
<comment type="cofactor">
    <cofactor evidence="3">
        <name>[4Fe-4S] cluster</name>
        <dbReference type="ChEBI" id="CHEBI:49883"/>
    </cofactor>
    <text evidence="3">Binds 2 [4Fe-4S] cluster.</text>
</comment>
<comment type="subunit">
    <text evidence="1 2">Core subunit of respiratory chain NADH dehydrogenase (Complex I) which is composed of 45 different subunits (By similarity). This is a component of the iron-sulfur (IP) fragment of the enzyme (By similarity). Interacts with RAB5IF (By similarity).</text>
</comment>
<comment type="subcellular location">
    <subcellularLocation>
        <location evidence="2">Mitochondrion inner membrane</location>
        <topology evidence="2">Peripheral membrane protein</topology>
        <orientation evidence="2">Matrix side</orientation>
    </subcellularLocation>
</comment>
<comment type="similarity">
    <text evidence="6">Belongs to the complex I 23 kDa subunit family.</text>
</comment>
<proteinExistence type="evidence at transcript level"/>
<protein>
    <recommendedName>
        <fullName>NADH dehydrogenase [ubiquinone] iron-sulfur protein 8, mitochondrial</fullName>
        <ecNumber evidence="1">7.1.1.2</ecNumber>
    </recommendedName>
    <alternativeName>
        <fullName>Complex I-23kD</fullName>
        <shortName>CI-23kD</shortName>
    </alternativeName>
    <alternativeName>
        <fullName>NADH-ubiquinone oxidoreductase 23 kDa subunit</fullName>
    </alternativeName>
</protein>
<organism>
    <name type="scientific">Gorilla gorilla gorilla</name>
    <name type="common">Western lowland gorilla</name>
    <dbReference type="NCBI Taxonomy" id="9595"/>
    <lineage>
        <taxon>Eukaryota</taxon>
        <taxon>Metazoa</taxon>
        <taxon>Chordata</taxon>
        <taxon>Craniata</taxon>
        <taxon>Vertebrata</taxon>
        <taxon>Euteleostomi</taxon>
        <taxon>Mammalia</taxon>
        <taxon>Eutheria</taxon>
        <taxon>Euarchontoglires</taxon>
        <taxon>Primates</taxon>
        <taxon>Haplorrhini</taxon>
        <taxon>Catarrhini</taxon>
        <taxon>Hominidae</taxon>
        <taxon>Gorilla</taxon>
    </lineage>
</organism>
<gene>
    <name type="primary">NDUFS8</name>
</gene>
<dbReference type="EC" id="7.1.1.2" evidence="1"/>
<dbReference type="EMBL" id="DQ885652">
    <property type="protein sequence ID" value="ABH12161.1"/>
    <property type="molecule type" value="mRNA"/>
</dbReference>
<dbReference type="RefSeq" id="NP_001266636.1">
    <property type="nucleotide sequence ID" value="NM_001279707.1"/>
</dbReference>
<dbReference type="RefSeq" id="XP_018891215.1">
    <property type="nucleotide sequence ID" value="XM_019035670.3"/>
</dbReference>
<dbReference type="RefSeq" id="XP_018891216.1">
    <property type="nucleotide sequence ID" value="XM_019035671.4"/>
</dbReference>
<dbReference type="RefSeq" id="XP_018891217.1">
    <property type="nucleotide sequence ID" value="XM_019035672.3"/>
</dbReference>
<dbReference type="SMR" id="Q0MQI2"/>
<dbReference type="FunCoup" id="Q0MQI2">
    <property type="interactions" value="1721"/>
</dbReference>
<dbReference type="STRING" id="9593.ENSGGOP00000004900"/>
<dbReference type="Ensembl" id="ENSGGOT00000005026.3">
    <property type="protein sequence ID" value="ENSGGOP00000004900.2"/>
    <property type="gene ID" value="ENSGGOG00000005001.3"/>
</dbReference>
<dbReference type="GeneID" id="101148614"/>
<dbReference type="KEGG" id="ggo:101148614"/>
<dbReference type="CTD" id="4728"/>
<dbReference type="eggNOG" id="KOG3256">
    <property type="taxonomic scope" value="Eukaryota"/>
</dbReference>
<dbReference type="GeneTree" id="ENSGT00390000003049"/>
<dbReference type="HOGENOM" id="CLU_067218_5_1_1"/>
<dbReference type="InParanoid" id="Q0MQI2"/>
<dbReference type="OMA" id="WYPDFFR"/>
<dbReference type="OrthoDB" id="10207at9604"/>
<dbReference type="Proteomes" id="UP000001519">
    <property type="component" value="Chromosome 11"/>
</dbReference>
<dbReference type="Bgee" id="ENSGGOG00000005001">
    <property type="expression patterns" value="Expressed in heart and 6 other cell types or tissues"/>
</dbReference>
<dbReference type="GO" id="GO:0005743">
    <property type="term" value="C:mitochondrial inner membrane"/>
    <property type="evidence" value="ECO:0000250"/>
    <property type="project" value="UniProtKB"/>
</dbReference>
<dbReference type="GO" id="GO:0005739">
    <property type="term" value="C:mitochondrion"/>
    <property type="evidence" value="ECO:0000250"/>
    <property type="project" value="UniProtKB"/>
</dbReference>
<dbReference type="GO" id="GO:0045271">
    <property type="term" value="C:respiratory chain complex I"/>
    <property type="evidence" value="ECO:0000250"/>
    <property type="project" value="UniProtKB"/>
</dbReference>
<dbReference type="GO" id="GO:0051539">
    <property type="term" value="F:4 iron, 4 sulfur cluster binding"/>
    <property type="evidence" value="ECO:0007669"/>
    <property type="project" value="UniProtKB-KW"/>
</dbReference>
<dbReference type="GO" id="GO:0046872">
    <property type="term" value="F:metal ion binding"/>
    <property type="evidence" value="ECO:0007669"/>
    <property type="project" value="UniProtKB-KW"/>
</dbReference>
<dbReference type="GO" id="GO:0008137">
    <property type="term" value="F:NADH dehydrogenase (ubiquinone) activity"/>
    <property type="evidence" value="ECO:0000250"/>
    <property type="project" value="UniProtKB"/>
</dbReference>
<dbReference type="GO" id="GO:0006120">
    <property type="term" value="P:mitochondrial electron transport, NADH to ubiquinone"/>
    <property type="evidence" value="ECO:0000250"/>
    <property type="project" value="UniProtKB"/>
</dbReference>
<dbReference type="GO" id="GO:0032981">
    <property type="term" value="P:mitochondrial respiratory chain complex I assembly"/>
    <property type="evidence" value="ECO:0000250"/>
    <property type="project" value="UniProtKB"/>
</dbReference>
<dbReference type="FunFam" id="3.30.70.3270:FF:000001">
    <property type="entry name" value="NADH-quinone oxidoreductase subunit I 1"/>
    <property type="match status" value="1"/>
</dbReference>
<dbReference type="Gene3D" id="3.30.70.3270">
    <property type="match status" value="1"/>
</dbReference>
<dbReference type="HAMAP" id="MF_01351">
    <property type="entry name" value="NDH1_NuoI"/>
    <property type="match status" value="1"/>
</dbReference>
<dbReference type="InterPro" id="IPR017896">
    <property type="entry name" value="4Fe4S_Fe-S-bd"/>
</dbReference>
<dbReference type="InterPro" id="IPR017900">
    <property type="entry name" value="4Fe4S_Fe_S_CS"/>
</dbReference>
<dbReference type="InterPro" id="IPR010226">
    <property type="entry name" value="NADH_quinone_OxRdtase_chainI"/>
</dbReference>
<dbReference type="NCBIfam" id="TIGR01971">
    <property type="entry name" value="NuoI"/>
    <property type="match status" value="1"/>
</dbReference>
<dbReference type="NCBIfam" id="NF004538">
    <property type="entry name" value="PRK05888.1-4"/>
    <property type="match status" value="1"/>
</dbReference>
<dbReference type="NCBIfam" id="NF004539">
    <property type="entry name" value="PRK05888.1-5"/>
    <property type="match status" value="1"/>
</dbReference>
<dbReference type="PANTHER" id="PTHR10849:SF20">
    <property type="entry name" value="NADH DEHYDROGENASE [UBIQUINONE] IRON-SULFUR PROTEIN 8, MITOCHONDRIAL"/>
    <property type="match status" value="1"/>
</dbReference>
<dbReference type="PANTHER" id="PTHR10849">
    <property type="entry name" value="NADH DEHYDROGENASE UBIQUINONE IRON-SULFUR PROTEIN 8, MITOCHONDRIAL"/>
    <property type="match status" value="1"/>
</dbReference>
<dbReference type="Pfam" id="PF12838">
    <property type="entry name" value="Fer4_7"/>
    <property type="match status" value="1"/>
</dbReference>
<dbReference type="SUPFAM" id="SSF54862">
    <property type="entry name" value="4Fe-4S ferredoxins"/>
    <property type="match status" value="1"/>
</dbReference>
<dbReference type="PROSITE" id="PS00198">
    <property type="entry name" value="4FE4S_FER_1"/>
    <property type="match status" value="2"/>
</dbReference>
<dbReference type="PROSITE" id="PS51379">
    <property type="entry name" value="4FE4S_FER_2"/>
    <property type="match status" value="2"/>
</dbReference>
<feature type="transit peptide" description="Mitochondrion" evidence="4">
    <location>
        <begin position="1"/>
        <end position="34"/>
    </location>
</feature>
<feature type="chain" id="PRO_0000251874" description="NADH dehydrogenase [ubiquinone] iron-sulfur protein 8, mitochondrial">
    <location>
        <begin position="35"/>
        <end position="210"/>
    </location>
</feature>
<feature type="domain" description="4Fe-4S ferredoxin-type 1" evidence="5">
    <location>
        <begin position="102"/>
        <end position="131"/>
    </location>
</feature>
<feature type="domain" description="4Fe-4S ferredoxin-type 2" evidence="5">
    <location>
        <begin position="141"/>
        <end position="170"/>
    </location>
</feature>
<feature type="binding site" evidence="5">
    <location>
        <position position="111"/>
    </location>
    <ligand>
        <name>[4Fe-4S] cluster</name>
        <dbReference type="ChEBI" id="CHEBI:49883"/>
        <label>1</label>
    </ligand>
</feature>
<feature type="binding site" evidence="5">
    <location>
        <position position="114"/>
    </location>
    <ligand>
        <name>[4Fe-4S] cluster</name>
        <dbReference type="ChEBI" id="CHEBI:49883"/>
        <label>1</label>
    </ligand>
</feature>
<feature type="binding site" evidence="5">
    <location>
        <position position="117"/>
    </location>
    <ligand>
        <name>[4Fe-4S] cluster</name>
        <dbReference type="ChEBI" id="CHEBI:49883"/>
        <label>1</label>
    </ligand>
</feature>
<feature type="binding site" evidence="5">
    <location>
        <position position="121"/>
    </location>
    <ligand>
        <name>[4Fe-4S] cluster</name>
        <dbReference type="ChEBI" id="CHEBI:49883"/>
        <label>2</label>
    </ligand>
</feature>
<feature type="binding site" evidence="5">
    <location>
        <position position="150"/>
    </location>
    <ligand>
        <name>[4Fe-4S] cluster</name>
        <dbReference type="ChEBI" id="CHEBI:49883"/>
        <label>2</label>
    </ligand>
</feature>
<feature type="binding site" evidence="5">
    <location>
        <position position="153"/>
    </location>
    <ligand>
        <name>[4Fe-4S] cluster</name>
        <dbReference type="ChEBI" id="CHEBI:49883"/>
        <label>2</label>
    </ligand>
</feature>
<feature type="binding site" evidence="5">
    <location>
        <position position="156"/>
    </location>
    <ligand>
        <name>[4Fe-4S] cluster</name>
        <dbReference type="ChEBI" id="CHEBI:49883"/>
        <label>2</label>
    </ligand>
</feature>
<feature type="binding site" evidence="5">
    <location>
        <position position="160"/>
    </location>
    <ligand>
        <name>[4Fe-4S] cluster</name>
        <dbReference type="ChEBI" id="CHEBI:49883"/>
        <label>1</label>
    </ligand>
</feature>
<reference key="1">
    <citation type="journal article" date="2006" name="Gene">
        <title>Adaptive selection of mitochondrial complex I subunits during primate radiation.</title>
        <authorList>
            <person name="Mishmar D."/>
            <person name="Ruiz-Pesini E."/>
            <person name="Mondragon-Palomino M."/>
            <person name="Procaccio V."/>
            <person name="Gaut B."/>
            <person name="Wallace D.C."/>
        </authorList>
    </citation>
    <scope>NUCLEOTIDE SEQUENCE [MRNA]</scope>
</reference>
<name>NDUS8_GORGO</name>
<sequence>MRCLTTPVLLRALAQAARAGPPGGRSLHSSAVAATYKYVNMQDPEMDMKSVTDRAARTLLWTELFRGLGMTLSYLFREPATINYPFEKGPLSPRFRGEHALRRYPSGEERCIACKLCEAICPAQAITIEAEPRADGSRRTTRYDIDMTKCIYCGFCQEACPVDAIVEGPNFEFSTETHEELLYNKEKLLNNGDKWEAEITANIQADYLYR</sequence>
<evidence type="ECO:0000250" key="1">
    <source>
        <dbReference type="UniProtKB" id="O00217"/>
    </source>
</evidence>
<evidence type="ECO:0000250" key="2">
    <source>
        <dbReference type="UniProtKB" id="P42028"/>
    </source>
</evidence>
<evidence type="ECO:0000250" key="3">
    <source>
        <dbReference type="UniProtKB" id="Q56224"/>
    </source>
</evidence>
<evidence type="ECO:0000255" key="4"/>
<evidence type="ECO:0000255" key="5">
    <source>
        <dbReference type="PROSITE-ProRule" id="PRU00711"/>
    </source>
</evidence>
<evidence type="ECO:0000305" key="6"/>
<keyword id="KW-0004">4Fe-4S</keyword>
<keyword id="KW-0249">Electron transport</keyword>
<keyword id="KW-0408">Iron</keyword>
<keyword id="KW-0411">Iron-sulfur</keyword>
<keyword id="KW-0472">Membrane</keyword>
<keyword id="KW-0479">Metal-binding</keyword>
<keyword id="KW-0496">Mitochondrion</keyword>
<keyword id="KW-0999">Mitochondrion inner membrane</keyword>
<keyword id="KW-0520">NAD</keyword>
<keyword id="KW-0560">Oxidoreductase</keyword>
<keyword id="KW-1185">Reference proteome</keyword>
<keyword id="KW-0677">Repeat</keyword>
<keyword id="KW-0679">Respiratory chain</keyword>
<keyword id="KW-0809">Transit peptide</keyword>
<keyword id="KW-1278">Translocase</keyword>
<keyword id="KW-0813">Transport</keyword>
<keyword id="KW-0830">Ubiquinone</keyword>